<reference key="1">
    <citation type="journal article" date="2001" name="Science">
        <title>Mechanisms of evolution in Rickettsia conorii and R. prowazekii.</title>
        <authorList>
            <person name="Ogata H."/>
            <person name="Audic S."/>
            <person name="Renesto-Audiffren P."/>
            <person name="Fournier P.-E."/>
            <person name="Barbe V."/>
            <person name="Samson D."/>
            <person name="Roux V."/>
            <person name="Cossart P."/>
            <person name="Weissenbach J."/>
            <person name="Claverie J.-M."/>
            <person name="Raoult D."/>
        </authorList>
    </citation>
    <scope>NUCLEOTIDE SEQUENCE [LARGE SCALE GENOMIC DNA]</scope>
    <source>
        <strain>ATCC VR-613 / Malish 7</strain>
    </source>
</reference>
<feature type="chain" id="PRO_0000101454" description="Uncharacterized protein RC0132">
    <location>
        <begin position="1"/>
        <end position="75"/>
    </location>
</feature>
<protein>
    <recommendedName>
        <fullName>Uncharacterized protein RC0132</fullName>
    </recommendedName>
</protein>
<name>Y132_RICCN</name>
<accession>Q92JD5</accession>
<gene>
    <name type="ordered locus">RC0132</name>
</gene>
<dbReference type="EMBL" id="AE006914">
    <property type="protein sequence ID" value="AAL02670.1"/>
    <property type="molecule type" value="Genomic_DNA"/>
</dbReference>
<dbReference type="PIR" id="D97716">
    <property type="entry name" value="D97716"/>
</dbReference>
<dbReference type="RefSeq" id="WP_010976810.1">
    <property type="nucleotide sequence ID" value="NC_003103.1"/>
</dbReference>
<dbReference type="SMR" id="Q92JD5"/>
<dbReference type="GeneID" id="928063"/>
<dbReference type="KEGG" id="rco:RC0132"/>
<dbReference type="PATRIC" id="fig|272944.4.peg.154"/>
<dbReference type="HOGENOM" id="CLU_203282_0_0_5"/>
<dbReference type="Proteomes" id="UP000000816">
    <property type="component" value="Chromosome"/>
</dbReference>
<proteinExistence type="predicted"/>
<sequence>MIEQDLIKVRIIGGNDSPESSKYLEDIRTTLNGIDNNTNMINIIGLDACKNIHPNSFELDGYHGGVRALDCRILN</sequence>
<organism>
    <name type="scientific">Rickettsia conorii (strain ATCC VR-613 / Malish 7)</name>
    <dbReference type="NCBI Taxonomy" id="272944"/>
    <lineage>
        <taxon>Bacteria</taxon>
        <taxon>Pseudomonadati</taxon>
        <taxon>Pseudomonadota</taxon>
        <taxon>Alphaproteobacteria</taxon>
        <taxon>Rickettsiales</taxon>
        <taxon>Rickettsiaceae</taxon>
        <taxon>Rickettsieae</taxon>
        <taxon>Rickettsia</taxon>
        <taxon>spotted fever group</taxon>
    </lineage>
</organism>